<name>SELN_MOUSE</name>
<dbReference type="EMBL" id="AL669982">
    <property type="status" value="NOT_ANNOTATED_CDS"/>
    <property type="molecule type" value="Genomic_DNA"/>
</dbReference>
<dbReference type="CCDS" id="CCDS38917.1"/>
<dbReference type="RefSeq" id="NP_083376.2">
    <property type="nucleotide sequence ID" value="NM_029100.2"/>
</dbReference>
<dbReference type="FunCoup" id="D3Z2R5">
    <property type="interactions" value="280"/>
</dbReference>
<dbReference type="IntAct" id="D3Z2R5">
    <property type="interactions" value="1"/>
</dbReference>
<dbReference type="STRING" id="10090.ENSMUSP00000060026"/>
<dbReference type="GlyCosmos" id="D3Z2R5">
    <property type="glycosylation" value="3 sites, No reported glycans"/>
</dbReference>
<dbReference type="GlyGen" id="D3Z2R5">
    <property type="glycosylation" value="3 sites, 1 N-linked glycan (1 site)"/>
</dbReference>
<dbReference type="iPTMnet" id="D3Z2R5"/>
<dbReference type="PhosphoSitePlus" id="D3Z2R5"/>
<dbReference type="jPOST" id="D3Z2R5"/>
<dbReference type="PaxDb" id="10090-ENSMUSP00000060026"/>
<dbReference type="PeptideAtlas" id="D3Z2R5"/>
<dbReference type="ProteomicsDB" id="257117"/>
<dbReference type="Pumba" id="D3Z2R5"/>
<dbReference type="Ensembl" id="ENSMUST00000060435.8">
    <property type="protein sequence ID" value="ENSMUSP00000060026.8"/>
    <property type="gene ID" value="ENSMUSG00000050989.11"/>
</dbReference>
<dbReference type="GeneID" id="74777"/>
<dbReference type="KEGG" id="mmu:74777"/>
<dbReference type="UCSC" id="uc008vfk.1">
    <property type="organism name" value="mouse"/>
</dbReference>
<dbReference type="AGR" id="MGI:2151208"/>
<dbReference type="CTD" id="57190"/>
<dbReference type="MGI" id="MGI:2151208">
    <property type="gene designation" value="Selenon"/>
</dbReference>
<dbReference type="VEuPathDB" id="HostDB:ENSMUSG00000050989"/>
<dbReference type="eggNOG" id="ENOG502QREI">
    <property type="taxonomic scope" value="Eukaryota"/>
</dbReference>
<dbReference type="GeneTree" id="ENSGT00390000005972"/>
<dbReference type="HOGENOM" id="CLU_042746_1_0_1"/>
<dbReference type="InParanoid" id="D3Z2R5"/>
<dbReference type="OMA" id="EITWQQE"/>
<dbReference type="OrthoDB" id="10062435at2759"/>
<dbReference type="PhylomeDB" id="D3Z2R5"/>
<dbReference type="TreeFam" id="TF329622"/>
<dbReference type="BioGRID-ORCS" id="74777">
    <property type="hits" value="2 hits in 75 CRISPR screens"/>
</dbReference>
<dbReference type="ChiTaRS" id="Selenon">
    <property type="organism name" value="mouse"/>
</dbReference>
<dbReference type="PRO" id="PR:D3Z2R5"/>
<dbReference type="Proteomes" id="UP000000589">
    <property type="component" value="Chromosome 4"/>
</dbReference>
<dbReference type="RNAct" id="D3Z2R5">
    <property type="molecule type" value="protein"/>
</dbReference>
<dbReference type="Bgee" id="ENSMUSG00000050989">
    <property type="expression patterns" value="Expressed in granulocyte and 228 other cell types or tissues"/>
</dbReference>
<dbReference type="GO" id="GO:0005783">
    <property type="term" value="C:endoplasmic reticulum"/>
    <property type="evidence" value="ECO:0000315"/>
    <property type="project" value="MGI"/>
</dbReference>
<dbReference type="GO" id="GO:0005789">
    <property type="term" value="C:endoplasmic reticulum membrane"/>
    <property type="evidence" value="ECO:0000266"/>
    <property type="project" value="MGI"/>
</dbReference>
<dbReference type="GO" id="GO:0044233">
    <property type="term" value="C:mitochondria-associated endoplasmic reticulum membrane contact site"/>
    <property type="evidence" value="ECO:0000315"/>
    <property type="project" value="MGI"/>
</dbReference>
<dbReference type="GO" id="GO:0031966">
    <property type="term" value="C:mitochondrial membrane"/>
    <property type="evidence" value="ECO:0000314"/>
    <property type="project" value="MGI"/>
</dbReference>
<dbReference type="GO" id="GO:0005739">
    <property type="term" value="C:mitochondrion"/>
    <property type="evidence" value="ECO:0000315"/>
    <property type="project" value="MGI"/>
</dbReference>
<dbReference type="GO" id="GO:0005509">
    <property type="term" value="F:calcium ion binding"/>
    <property type="evidence" value="ECO:0007669"/>
    <property type="project" value="InterPro"/>
</dbReference>
<dbReference type="GO" id="GO:0016491">
    <property type="term" value="F:oxidoreductase activity"/>
    <property type="evidence" value="ECO:0007669"/>
    <property type="project" value="UniProtKB-KW"/>
</dbReference>
<dbReference type="GO" id="GO:0046034">
    <property type="term" value="P:ATP metabolic process"/>
    <property type="evidence" value="ECO:0000315"/>
    <property type="project" value="MGI"/>
</dbReference>
<dbReference type="GO" id="GO:0055074">
    <property type="term" value="P:calcium ion homeostasis"/>
    <property type="evidence" value="ECO:0000250"/>
    <property type="project" value="UniProtKB"/>
</dbReference>
<dbReference type="GO" id="GO:0070509">
    <property type="term" value="P:calcium ion import"/>
    <property type="evidence" value="ECO:0000315"/>
    <property type="project" value="MGI"/>
</dbReference>
<dbReference type="GO" id="GO:0006816">
    <property type="term" value="P:calcium ion transport"/>
    <property type="evidence" value="ECO:0000315"/>
    <property type="project" value="MGI"/>
</dbReference>
<dbReference type="GO" id="GO:0045454">
    <property type="term" value="P:cell redox homeostasis"/>
    <property type="evidence" value="ECO:0000315"/>
    <property type="project" value="MGI"/>
</dbReference>
<dbReference type="GO" id="GO:0071313">
    <property type="term" value="P:cellular response to caffeine"/>
    <property type="evidence" value="ECO:0000315"/>
    <property type="project" value="MGI"/>
</dbReference>
<dbReference type="GO" id="GO:0034599">
    <property type="term" value="P:cellular response to oxidative stress"/>
    <property type="evidence" value="ECO:0000315"/>
    <property type="project" value="MGI"/>
</dbReference>
<dbReference type="GO" id="GO:0030199">
    <property type="term" value="P:collagen fibril organization"/>
    <property type="evidence" value="ECO:0000315"/>
    <property type="project" value="MGI"/>
</dbReference>
<dbReference type="GO" id="GO:0002086">
    <property type="term" value="P:diaphragm contraction"/>
    <property type="evidence" value="ECO:0000315"/>
    <property type="project" value="MGI"/>
</dbReference>
<dbReference type="GO" id="GO:0006112">
    <property type="term" value="P:energy reserve metabolic process"/>
    <property type="evidence" value="ECO:0000315"/>
    <property type="project" value="MGI"/>
</dbReference>
<dbReference type="GO" id="GO:0010467">
    <property type="term" value="P:gene expression"/>
    <property type="evidence" value="ECO:0000315"/>
    <property type="project" value="MGI"/>
</dbReference>
<dbReference type="GO" id="GO:0006091">
    <property type="term" value="P:generation of precursor metabolites and energy"/>
    <property type="evidence" value="ECO:0000315"/>
    <property type="project" value="MGI"/>
</dbReference>
<dbReference type="GO" id="GO:0019852">
    <property type="term" value="P:L-ascorbic acid metabolic process"/>
    <property type="evidence" value="ECO:0000315"/>
    <property type="project" value="MGI"/>
</dbReference>
<dbReference type="GO" id="GO:0015882">
    <property type="term" value="P:L-ascorbic acid transmembrane transport"/>
    <property type="evidence" value="ECO:0000315"/>
    <property type="project" value="MGI"/>
</dbReference>
<dbReference type="GO" id="GO:0048286">
    <property type="term" value="P:lung alveolus development"/>
    <property type="evidence" value="ECO:0000315"/>
    <property type="project" value="MGI"/>
</dbReference>
<dbReference type="GO" id="GO:0044091">
    <property type="term" value="P:membrane biogenesis"/>
    <property type="evidence" value="ECO:0000315"/>
    <property type="project" value="MGI"/>
</dbReference>
<dbReference type="GO" id="GO:0061024">
    <property type="term" value="P:membrane organization"/>
    <property type="evidence" value="ECO:0000315"/>
    <property type="project" value="MGI"/>
</dbReference>
<dbReference type="GO" id="GO:0022614">
    <property type="term" value="P:membrane to membrane docking"/>
    <property type="evidence" value="ECO:0000315"/>
    <property type="project" value="MGI"/>
</dbReference>
<dbReference type="GO" id="GO:0006851">
    <property type="term" value="P:mitochondrial calcium ion transmembrane transport"/>
    <property type="evidence" value="ECO:0000315"/>
    <property type="project" value="MGI"/>
</dbReference>
<dbReference type="GO" id="GO:0007005">
    <property type="term" value="P:mitochondrion organization"/>
    <property type="evidence" value="ECO:0000315"/>
    <property type="project" value="MGI"/>
</dbReference>
<dbReference type="GO" id="GO:1990456">
    <property type="term" value="P:mitochondrion-endoplasmic reticulum membrane tethering"/>
    <property type="evidence" value="ECO:0000315"/>
    <property type="project" value="MGI"/>
</dbReference>
<dbReference type="GO" id="GO:0033555">
    <property type="term" value="P:multicellular organismal response to stress"/>
    <property type="evidence" value="ECO:0000315"/>
    <property type="project" value="MGI"/>
</dbReference>
<dbReference type="GO" id="GO:0061061">
    <property type="term" value="P:muscle structure development"/>
    <property type="evidence" value="ECO:0000315"/>
    <property type="project" value="MGI"/>
</dbReference>
<dbReference type="GO" id="GO:1902884">
    <property type="term" value="P:positive regulation of response to oxidative stress"/>
    <property type="evidence" value="ECO:0000250"/>
    <property type="project" value="UniProtKB"/>
</dbReference>
<dbReference type="GO" id="GO:0014858">
    <property type="term" value="P:positive regulation of skeletal muscle cell proliferation"/>
    <property type="evidence" value="ECO:0000314"/>
    <property type="project" value="MGI"/>
</dbReference>
<dbReference type="GO" id="GO:0060314">
    <property type="term" value="P:regulation of ryanodine-sensitive calcium-release channel activity"/>
    <property type="evidence" value="ECO:0000250"/>
    <property type="project" value="UniProtKB"/>
</dbReference>
<dbReference type="GO" id="GO:0003016">
    <property type="term" value="P:respiratory system process"/>
    <property type="evidence" value="ECO:0000315"/>
    <property type="project" value="MGI"/>
</dbReference>
<dbReference type="GO" id="GO:0034976">
    <property type="term" value="P:response to endoplasmic reticulum stress"/>
    <property type="evidence" value="ECO:0000315"/>
    <property type="project" value="MGI"/>
</dbReference>
<dbReference type="GO" id="GO:0014873">
    <property type="term" value="P:response to muscle activity involved in regulation of muscle adaptation"/>
    <property type="evidence" value="ECO:0000315"/>
    <property type="project" value="MGI"/>
</dbReference>
<dbReference type="GO" id="GO:0048741">
    <property type="term" value="P:skeletal muscle fiber development"/>
    <property type="evidence" value="ECO:0000315"/>
    <property type="project" value="MGI"/>
</dbReference>
<dbReference type="GO" id="GO:0014816">
    <property type="term" value="P:skeletal muscle satellite cell differentiation"/>
    <property type="evidence" value="ECO:0000315"/>
    <property type="project" value="MGI"/>
</dbReference>
<dbReference type="GO" id="GO:0014834">
    <property type="term" value="P:skeletal muscle satellite cell maintenance involved in skeletal muscle regeneration"/>
    <property type="evidence" value="ECO:0000315"/>
    <property type="project" value="UniProtKB"/>
</dbReference>
<dbReference type="GO" id="GO:0007519">
    <property type="term" value="P:skeletal muscle tissue development"/>
    <property type="evidence" value="ECO:0000315"/>
    <property type="project" value="MGI"/>
</dbReference>
<dbReference type="GO" id="GO:0043403">
    <property type="term" value="P:skeletal muscle tissue regeneration"/>
    <property type="evidence" value="ECO:0000315"/>
    <property type="project" value="MGI"/>
</dbReference>
<dbReference type="GO" id="GO:0007179">
    <property type="term" value="P:transforming growth factor beta receptor signaling pathway"/>
    <property type="evidence" value="ECO:0000315"/>
    <property type="project" value="MGI"/>
</dbReference>
<dbReference type="InterPro" id="IPR002048">
    <property type="entry name" value="EF_hand_dom"/>
</dbReference>
<dbReference type="PANTHER" id="PTHR16213">
    <property type="entry name" value="SELENOPROTEIN N"/>
    <property type="match status" value="1"/>
</dbReference>
<dbReference type="PANTHER" id="PTHR16213:SF78">
    <property type="entry name" value="SELENOPROTEIN N"/>
    <property type="match status" value="1"/>
</dbReference>
<dbReference type="PROSITE" id="PS50222">
    <property type="entry name" value="EF_HAND_2"/>
    <property type="match status" value="1"/>
</dbReference>
<proteinExistence type="inferred from homology"/>
<feature type="signal peptide" evidence="2">
    <location>
        <begin position="1"/>
        <end position="42"/>
    </location>
</feature>
<feature type="chain" id="PRO_0000436040" description="Selenoprotein N">
    <location>
        <begin position="43"/>
        <end position="557"/>
    </location>
</feature>
<feature type="domain" description="EF-hand" evidence="3">
    <location>
        <begin position="67"/>
        <end position="102"/>
    </location>
</feature>
<feature type="region of interest" description="Disordered" evidence="4">
    <location>
        <begin position="1"/>
        <end position="24"/>
    </location>
</feature>
<feature type="non-standard amino acid" description="Selenocysteine">
    <location>
        <position position="428"/>
    </location>
</feature>
<feature type="glycosylation site" description="N-linked (GlcNAc...) asparagine" evidence="2">
    <location>
        <position position="156"/>
    </location>
</feature>
<feature type="glycosylation site" description="N-linked (GlcNAc...) asparagine" evidence="2">
    <location>
        <position position="449"/>
    </location>
</feature>
<feature type="glycosylation site" description="N-linked (GlcNAc...) asparagine" evidence="2">
    <location>
        <position position="497"/>
    </location>
</feature>
<organism>
    <name type="scientific">Mus musculus</name>
    <name type="common">Mouse</name>
    <dbReference type="NCBI Taxonomy" id="10090"/>
    <lineage>
        <taxon>Eukaryota</taxon>
        <taxon>Metazoa</taxon>
        <taxon>Chordata</taxon>
        <taxon>Craniata</taxon>
        <taxon>Vertebrata</taxon>
        <taxon>Euteleostomi</taxon>
        <taxon>Mammalia</taxon>
        <taxon>Eutheria</taxon>
        <taxon>Euarchontoglires</taxon>
        <taxon>Glires</taxon>
        <taxon>Rodentia</taxon>
        <taxon>Myomorpha</taxon>
        <taxon>Muroidea</taxon>
        <taxon>Muridae</taxon>
        <taxon>Murinae</taxon>
        <taxon>Mus</taxon>
        <taxon>Mus</taxon>
    </lineage>
</organism>
<reference key="1">
    <citation type="journal article" date="2009" name="PLoS Biol.">
        <title>Lineage-specific biology revealed by a finished genome assembly of the mouse.</title>
        <authorList>
            <person name="Church D.M."/>
            <person name="Goodstadt L."/>
            <person name="Hillier L.W."/>
            <person name="Zody M.C."/>
            <person name="Goldstein S."/>
            <person name="She X."/>
            <person name="Bult C.J."/>
            <person name="Agarwala R."/>
            <person name="Cherry J.L."/>
            <person name="DiCuccio M."/>
            <person name="Hlavina W."/>
            <person name="Kapustin Y."/>
            <person name="Meric P."/>
            <person name="Maglott D."/>
            <person name="Birtle Z."/>
            <person name="Marques A.C."/>
            <person name="Graves T."/>
            <person name="Zhou S."/>
            <person name="Teague B."/>
            <person name="Potamousis K."/>
            <person name="Churas C."/>
            <person name="Place M."/>
            <person name="Herschleb J."/>
            <person name="Runnheim R."/>
            <person name="Forrest D."/>
            <person name="Amos-Landgraf J."/>
            <person name="Schwartz D.C."/>
            <person name="Cheng Z."/>
            <person name="Lindblad-Toh K."/>
            <person name="Eichler E.E."/>
            <person name="Ponting C.P."/>
        </authorList>
    </citation>
    <scope>NUCLEOTIDE SEQUENCE [LARGE SCALE GENOMIC DNA]</scope>
    <source>
        <strain>C57BL/6J</strain>
    </source>
</reference>
<reference key="2">
    <citation type="journal article" date="2011" name="Hum. Mol. Genet.">
        <title>Satellite cell loss and impaired muscle regeneration in selenoprotein N deficiency.</title>
        <authorList>
            <person name="Castets P."/>
            <person name="Bertrand A.T."/>
            <person name="Beuvin M."/>
            <person name="Ferry A."/>
            <person name="Le Grand F."/>
            <person name="Castets M."/>
            <person name="Chazot G."/>
            <person name="Rederstorff M."/>
            <person name="Krol A."/>
            <person name="Lescure A."/>
            <person name="Romero N.B."/>
            <person name="Guicheney P."/>
            <person name="Allamand V."/>
        </authorList>
    </citation>
    <scope>FUNCTION</scope>
    <scope>DISRUPTION PHENOTYPE</scope>
</reference>
<reference key="3">
    <citation type="journal article" date="2011" name="PLoS ONE">
        <title>Increased muscle stress-sensitivity induced by selenoprotein N inactivation in mouse: a mammalian model for SEPN1-related myopathy.</title>
        <authorList>
            <person name="Rederstorff M."/>
            <person name="Castets P."/>
            <person name="Arbogast S."/>
            <person name="Laine J."/>
            <person name="Vassilopoulos S."/>
            <person name="Beuvin M."/>
            <person name="Dubourg O."/>
            <person name="Vignaud A."/>
            <person name="Ferry A."/>
            <person name="Krol A."/>
            <person name="Allamand V."/>
            <person name="Guicheney P."/>
            <person name="Ferreiro A."/>
            <person name="Lescure A."/>
        </authorList>
    </citation>
    <scope>DISRUPTION PHENOTYPE</scope>
</reference>
<reference key="4">
    <citation type="journal article" date="2015" name="Hum. Mol. Genet.">
        <title>SEPN1, an endoplasmic reticulum-localized selenoprotein linked to skeletal muscle pathology, counteracts hyperoxidation by means of redox-regulating SERCA2 pump activity.</title>
        <authorList>
            <person name="Marino M."/>
            <person name="Stoilova T."/>
            <person name="Giorgi C."/>
            <person name="Bachi A."/>
            <person name="Cattaneo A."/>
            <person name="Auricchio A."/>
            <person name="Pinton P."/>
            <person name="Zito E."/>
        </authorList>
    </citation>
    <scope>FUNCTION</scope>
</reference>
<evidence type="ECO:0000250" key="1">
    <source>
        <dbReference type="UniProtKB" id="Q9NZV5"/>
    </source>
</evidence>
<evidence type="ECO:0000255" key="2"/>
<evidence type="ECO:0000255" key="3">
    <source>
        <dbReference type="PROSITE-ProRule" id="PRU00448"/>
    </source>
</evidence>
<evidence type="ECO:0000256" key="4">
    <source>
        <dbReference type="SAM" id="MobiDB-lite"/>
    </source>
</evidence>
<evidence type="ECO:0000269" key="5">
    <source>
    </source>
</evidence>
<evidence type="ECO:0000269" key="6">
    <source>
    </source>
</evidence>
<evidence type="ECO:0000269" key="7">
    <source>
    </source>
</evidence>
<evidence type="ECO:0000303" key="8">
    <source>
    </source>
</evidence>
<evidence type="ECO:0000312" key="9">
    <source>
        <dbReference type="MGI" id="MGI:2151208"/>
    </source>
</evidence>
<protein>
    <recommendedName>
        <fullName evidence="8">Selenoprotein N</fullName>
        <shortName evidence="8">SelN</shortName>
    </recommendedName>
</protein>
<comment type="function">
    <text evidence="1 5 7">Plays an important role in cell protection against oxidative stress and in the regulation of redox-related calcium homeostasis. Regulates the calcium level of the ER by protecting the calcium pump ATP2A2 against the oxidoreductase ERO1A-mediated oxidative damage. Within the ER, ERO1A activity increases the concentration of H(2)O(2), which attacks the luminal thiols in ATP2A2 and thus leads to cysteinyl sulfenic acid formation (-SOH) and SEPN1 reduces the SOH back to free thiol (-SH), thus restoring ATP2A2 activity (PubMed:25452428). Acts as a modulator of ryanodine receptor (RyR) activity: protects RyR from oxidation due to increased oxidative stress, or directly controls the RyR redox state, regulating the RyR-mediated calcium mobilization required for normal muscle development and differentiation (By similarity). Essential for muscle regeneration and satellite cell maintenance in skeletal muscle (PubMed:21131290).</text>
</comment>
<comment type="subunit">
    <text evidence="1">Interacts with RYR1, RYR2 and RYR3.</text>
</comment>
<comment type="subcellular location">
    <subcellularLocation>
        <location evidence="1">Endoplasmic reticulum membrane</location>
    </subcellularLocation>
</comment>
<comment type="domain">
    <text evidence="1">The N-terminus (first 61 amino acids) contains an endoplasmic reticulum addressing and retention targeting signal.</text>
</comment>
<comment type="PTM">
    <text evidence="1">N-glycosylated.</text>
</comment>
<comment type="disruption phenotype">
    <text evidence="5 6">Mutant mice show only subtle alterations in the muscle morphology, ultrastructure and contractility. They display increased muscle stress-sensitivity to physical exercise when performed under stress conditions such as a forced swimming test. Under these conditions, they develop muscle atrophy, predominantly affecting trunk muscles and leading to severe kyphosis (PubMed:21858002). The number of satellite cells in uninjured adult muscle is reduced. After one single cardiotoxin-induced injury, a correct restoration of the muscle fibers is seen in skeletal muscle, whereas after two successive injuries, regeneration is completely abolished (PubMed:21131290).</text>
</comment>
<sequence>MGQARPAARRPHSPDPGAQPAPPRRRARALALLGALLAAAAAVAAARACALLADAQAAARQESALKVLGTDGLFLFSSLDTDQDMYISPEEFKPIAEKLTGSVPVANYEEEELPHDPSEETLTIEARFQPLLMETMTKSKDGFLGVSRLALSGLRNWTTAASPSAAFAARHFRPFLPPPGQELGQPWWIIPGELSVFTGYLSNNRFYPPPPKGKEVIIHRLLSMFHPRPFVKTRFAPQGTVACLTAISDSYYTVMFRIHAEFQLSEPPDFPFWFSPGQFTGHIILSKDATHIRDFRLFVPNHRSLNVDMEWLYGASETSNMEVDIGYVPQMELEAVGPSVPSVILDEDGNMIDSRLPSGEPLQFVFEEIKWHQELSWEEAARRLEVAMYPFKKVNYLPFTEAFDRARAEKKLVHSILLWGALDDQSCUGSGRTLRETVLESPPILTLLNESFISTWSLVKELEDLQTQQENPLHRQLAGLHLEKYSFPVEMMICLPNGTVVHHINANYFLDITSMKPEDMENNNVFSFSSSFEDPSTATYMQFLREGLRRGLPLLQP</sequence>
<keyword id="KW-0256">Endoplasmic reticulum</keyword>
<keyword id="KW-0325">Glycoprotein</keyword>
<keyword id="KW-0472">Membrane</keyword>
<keyword id="KW-0560">Oxidoreductase</keyword>
<keyword id="KW-1185">Reference proteome</keyword>
<keyword id="KW-0677">Repeat</keyword>
<keyword id="KW-0712">Selenocysteine</keyword>
<keyword id="KW-0732">Signal</keyword>
<gene>
    <name evidence="9" type="primary">Selenon</name>
    <name evidence="8" type="synonym">Seln</name>
    <name evidence="9" type="synonym">Sepn1</name>
</gene>
<accession>D3Z2R5</accession>